<evidence type="ECO:0000255" key="1">
    <source>
        <dbReference type="HAMAP-Rule" id="MF_00409"/>
    </source>
</evidence>
<gene>
    <name evidence="1" type="primary">lpxK</name>
    <name type="ordered locus">HP_0328</name>
</gene>
<name>LPXK_HELPY</name>
<comment type="function">
    <text evidence="1">Transfers the gamma-phosphate of ATP to the 4'-position of a tetraacyldisaccharide 1-phosphate intermediate (termed DS-1-P) to form tetraacyldisaccharide 1,4'-bis-phosphate (lipid IVA).</text>
</comment>
<comment type="catalytic activity">
    <reaction evidence="1">
        <text>a lipid A disaccharide + ATP = a lipid IVA + ADP + H(+)</text>
        <dbReference type="Rhea" id="RHEA:67840"/>
        <dbReference type="ChEBI" id="CHEBI:15378"/>
        <dbReference type="ChEBI" id="CHEBI:30616"/>
        <dbReference type="ChEBI" id="CHEBI:176343"/>
        <dbReference type="ChEBI" id="CHEBI:176425"/>
        <dbReference type="ChEBI" id="CHEBI:456216"/>
        <dbReference type="EC" id="2.7.1.130"/>
    </reaction>
</comment>
<comment type="pathway">
    <text evidence="1">Glycolipid biosynthesis; lipid IV(A) biosynthesis; lipid IV(A) from (3R)-3-hydroxytetradecanoyl-[acyl-carrier-protein] and UDP-N-acetyl-alpha-D-glucosamine: step 6/6.</text>
</comment>
<comment type="similarity">
    <text evidence="1">Belongs to the LpxK family.</text>
</comment>
<feature type="chain" id="PRO_0000190930" description="Tetraacyldisaccharide 4'-kinase">
    <location>
        <begin position="1"/>
        <end position="312"/>
    </location>
</feature>
<feature type="binding site" evidence="1">
    <location>
        <begin position="60"/>
        <end position="67"/>
    </location>
    <ligand>
        <name>ATP</name>
        <dbReference type="ChEBI" id="CHEBI:30616"/>
    </ligand>
</feature>
<dbReference type="EC" id="2.7.1.130" evidence="1"/>
<dbReference type="EMBL" id="AE000511">
    <property type="protein sequence ID" value="AAD07395.1"/>
    <property type="molecule type" value="Genomic_DNA"/>
</dbReference>
<dbReference type="PIR" id="H64560">
    <property type="entry name" value="H64560"/>
</dbReference>
<dbReference type="RefSeq" id="NP_207126.1">
    <property type="nucleotide sequence ID" value="NC_000915.1"/>
</dbReference>
<dbReference type="RefSeq" id="WP_000833936.1">
    <property type="nucleotide sequence ID" value="NC_018939.1"/>
</dbReference>
<dbReference type="SMR" id="O25095"/>
<dbReference type="STRING" id="85962.HP_0328"/>
<dbReference type="PaxDb" id="85962-C694_01660"/>
<dbReference type="EnsemblBacteria" id="AAD07395">
    <property type="protein sequence ID" value="AAD07395"/>
    <property type="gene ID" value="HP_0328"/>
</dbReference>
<dbReference type="KEGG" id="heo:C694_01660"/>
<dbReference type="KEGG" id="hpy:HP_0328"/>
<dbReference type="PATRIC" id="fig|85962.47.peg.350"/>
<dbReference type="eggNOG" id="COG1663">
    <property type="taxonomic scope" value="Bacteria"/>
</dbReference>
<dbReference type="InParanoid" id="O25095"/>
<dbReference type="OrthoDB" id="9766423at2"/>
<dbReference type="PhylomeDB" id="O25095"/>
<dbReference type="BioCyc" id="MetaCyc:HP_RS01615-MONOMER"/>
<dbReference type="UniPathway" id="UPA00359">
    <property type="reaction ID" value="UER00482"/>
</dbReference>
<dbReference type="Proteomes" id="UP000000429">
    <property type="component" value="Chromosome"/>
</dbReference>
<dbReference type="GO" id="GO:0005886">
    <property type="term" value="C:plasma membrane"/>
    <property type="evidence" value="ECO:0000318"/>
    <property type="project" value="GO_Central"/>
</dbReference>
<dbReference type="GO" id="GO:0005524">
    <property type="term" value="F:ATP binding"/>
    <property type="evidence" value="ECO:0007669"/>
    <property type="project" value="UniProtKB-UniRule"/>
</dbReference>
<dbReference type="GO" id="GO:0009029">
    <property type="term" value="F:tetraacyldisaccharide 4'-kinase activity"/>
    <property type="evidence" value="ECO:0000318"/>
    <property type="project" value="GO_Central"/>
</dbReference>
<dbReference type="GO" id="GO:0009245">
    <property type="term" value="P:lipid A biosynthetic process"/>
    <property type="evidence" value="ECO:0000318"/>
    <property type="project" value="GO_Central"/>
</dbReference>
<dbReference type="GO" id="GO:0009244">
    <property type="term" value="P:lipopolysaccharide core region biosynthetic process"/>
    <property type="evidence" value="ECO:0000318"/>
    <property type="project" value="GO_Central"/>
</dbReference>
<dbReference type="HAMAP" id="MF_00409">
    <property type="entry name" value="LpxK"/>
    <property type="match status" value="1"/>
</dbReference>
<dbReference type="InterPro" id="IPR003758">
    <property type="entry name" value="LpxK"/>
</dbReference>
<dbReference type="NCBIfam" id="NF001892">
    <property type="entry name" value="PRK00652.1-5"/>
    <property type="match status" value="1"/>
</dbReference>
<dbReference type="PANTHER" id="PTHR42724">
    <property type="entry name" value="TETRAACYLDISACCHARIDE 4'-KINASE"/>
    <property type="match status" value="1"/>
</dbReference>
<dbReference type="PANTHER" id="PTHR42724:SF1">
    <property type="entry name" value="TETRAACYLDISACCHARIDE 4'-KINASE, MITOCHONDRIAL-RELATED"/>
    <property type="match status" value="1"/>
</dbReference>
<dbReference type="Pfam" id="PF02606">
    <property type="entry name" value="LpxK"/>
    <property type="match status" value="1"/>
</dbReference>
<organism>
    <name type="scientific">Helicobacter pylori (strain ATCC 700392 / 26695)</name>
    <name type="common">Campylobacter pylori</name>
    <dbReference type="NCBI Taxonomy" id="85962"/>
    <lineage>
        <taxon>Bacteria</taxon>
        <taxon>Pseudomonadati</taxon>
        <taxon>Campylobacterota</taxon>
        <taxon>Epsilonproteobacteria</taxon>
        <taxon>Campylobacterales</taxon>
        <taxon>Helicobacteraceae</taxon>
        <taxon>Helicobacter</taxon>
    </lineage>
</organism>
<protein>
    <recommendedName>
        <fullName evidence="1">Tetraacyldisaccharide 4'-kinase</fullName>
        <ecNumber evidence="1">2.7.1.130</ecNumber>
    </recommendedName>
    <alternativeName>
        <fullName evidence="1">Lipid A 4'-kinase</fullName>
    </alternativeName>
</protein>
<reference key="1">
    <citation type="journal article" date="1997" name="Nature">
        <title>The complete genome sequence of the gastric pathogen Helicobacter pylori.</title>
        <authorList>
            <person name="Tomb J.-F."/>
            <person name="White O."/>
            <person name="Kerlavage A.R."/>
            <person name="Clayton R.A."/>
            <person name="Sutton G.G."/>
            <person name="Fleischmann R.D."/>
            <person name="Ketchum K.A."/>
            <person name="Klenk H.-P."/>
            <person name="Gill S.R."/>
            <person name="Dougherty B.A."/>
            <person name="Nelson K.E."/>
            <person name="Quackenbush J."/>
            <person name="Zhou L."/>
            <person name="Kirkness E.F."/>
            <person name="Peterson S.N."/>
            <person name="Loftus B.J."/>
            <person name="Richardson D.L."/>
            <person name="Dodson R.J."/>
            <person name="Khalak H.G."/>
            <person name="Glodek A."/>
            <person name="McKenney K."/>
            <person name="FitzGerald L.M."/>
            <person name="Lee N."/>
            <person name="Adams M.D."/>
            <person name="Hickey E.K."/>
            <person name="Berg D.E."/>
            <person name="Gocayne J.D."/>
            <person name="Utterback T.R."/>
            <person name="Peterson J.D."/>
            <person name="Kelley J.M."/>
            <person name="Cotton M.D."/>
            <person name="Weidman J.F."/>
            <person name="Fujii C."/>
            <person name="Bowman C."/>
            <person name="Watthey L."/>
            <person name="Wallin E."/>
            <person name="Hayes W.S."/>
            <person name="Borodovsky M."/>
            <person name="Karp P.D."/>
            <person name="Smith H.O."/>
            <person name="Fraser C.M."/>
            <person name="Venter J.C."/>
        </authorList>
    </citation>
    <scope>NUCLEOTIDE SEQUENCE [LARGE SCALE GENOMIC DNA]</scope>
    <source>
        <strain>ATCC 700392 / 26695</strain>
    </source>
</reference>
<keyword id="KW-0067">ATP-binding</keyword>
<keyword id="KW-0418">Kinase</keyword>
<keyword id="KW-0441">Lipid A biosynthesis</keyword>
<keyword id="KW-0444">Lipid biosynthesis</keyword>
<keyword id="KW-0443">Lipid metabolism</keyword>
<keyword id="KW-0547">Nucleotide-binding</keyword>
<keyword id="KW-1185">Reference proteome</keyword>
<keyword id="KW-0808">Transferase</keyword>
<sequence>MKSDKPFLERYFYDPTLLQKGLIFALYPFSLIYQGIATLKRKTAKKHDFKIPIISIGNLIAGGSGKTPFILEIAPRYQEVAVVSRGYQRDSKGLVVVSVKGNILVSQKTAGDEAYLLALNLKQASVIVSEKRELGVLKALELGAKIVFLDDGFRFNFNQFNLLLKPKVPPYYPFCLPSGLYRESIKSYEEAHLVVTEDKDYQRITSISRPTKRMLLVTAIANPSRLDAFLPKEVVKKLYFKDHAPFNLELLEKEFYQNNATSLLVTSKDLVKLQDCNLPLSVLNLKLEICPKVLEEIDHYILSYPYNTKERL</sequence>
<accession>O25095</accession>
<proteinExistence type="inferred from homology"/>